<protein>
    <recommendedName>
        <fullName>Matrix protein</fullName>
    </recommendedName>
</protein>
<proteinExistence type="inferred from homology"/>
<evidence type="ECO:0000305" key="1"/>
<comment type="function">
    <text>The M protein has a crucial role in virus assembly and interacts with the RNP complex as well as with the viral membrane.</text>
</comment>
<comment type="subcellular location">
    <subcellularLocation>
        <location evidence="1">Virion</location>
    </subcellularLocation>
</comment>
<comment type="similarity">
    <text evidence="1">Belongs to the morbillivirus/respirovirus/rubulavirus M protein family.</text>
</comment>
<keyword id="KW-0261">Viral envelope protein</keyword>
<keyword id="KW-0468">Viral matrix protein</keyword>
<keyword id="KW-0946">Virion</keyword>
<gene>
    <name type="primary">M</name>
</gene>
<organism>
    <name type="scientific">Phocine distemper virus</name>
    <name type="common">PDV</name>
    <dbReference type="NCBI Taxonomy" id="11240"/>
    <lineage>
        <taxon>Viruses</taxon>
        <taxon>Riboviria</taxon>
        <taxon>Orthornavirae</taxon>
        <taxon>Negarnaviricota</taxon>
        <taxon>Haploviricotina</taxon>
        <taxon>Monjiviricetes</taxon>
        <taxon>Mononegavirales</taxon>
        <taxon>Paramyxoviridae</taxon>
        <taxon>Orthoparamyxovirinae</taxon>
        <taxon>Morbillivirus</taxon>
        <taxon>Morbillivirus phocae</taxon>
    </lineage>
</organism>
<feature type="chain" id="PRO_0000142761" description="Matrix protein">
    <location>
        <begin position="1"/>
        <end position="335"/>
    </location>
</feature>
<feature type="sequence conflict" description="In Ref. 2; AAB22302." evidence="1" ref="2">
    <original>A</original>
    <variation>T</variation>
    <location>
        <position position="84"/>
    </location>
</feature>
<feature type="sequence conflict" description="In Ref. 2; AAB22302." evidence="1" ref="2">
    <original>F</original>
    <variation>V</variation>
    <location>
        <position position="178"/>
    </location>
</feature>
<feature type="sequence conflict" description="In Ref. 2; AAB22302." evidence="1" ref="2">
    <original>Q</original>
    <variation>H</variation>
    <location>
        <position position="310"/>
    </location>
</feature>
<feature type="sequence conflict" description="In Ref. 2." evidence="1" ref="2">
    <original>L</original>
    <variation>P</variation>
    <location>
        <position position="331"/>
    </location>
</feature>
<feature type="sequence conflict" description="In Ref. 2." evidence="1" ref="2">
    <original>K</original>
    <variation>Q</variation>
    <location>
        <position position="333"/>
    </location>
</feature>
<organismHost>
    <name type="scientific">Phocidae</name>
    <name type="common">true seals</name>
    <dbReference type="NCBI Taxonomy" id="9709"/>
</organismHost>
<name>MATRX_PHODV</name>
<dbReference type="EMBL" id="D10371">
    <property type="protein sequence ID" value="BAA01205.1"/>
    <property type="molecule type" value="Genomic_RNA"/>
</dbReference>
<dbReference type="EMBL" id="S38237">
    <property type="protein sequence ID" value="AAB22302.1"/>
    <property type="molecule type" value="Genomic_DNA"/>
</dbReference>
<dbReference type="PIR" id="JQ1566">
    <property type="entry name" value="JQ1566"/>
</dbReference>
<dbReference type="SMR" id="P35947"/>
<dbReference type="GO" id="GO:0019031">
    <property type="term" value="C:viral envelope"/>
    <property type="evidence" value="ECO:0007669"/>
    <property type="project" value="UniProtKB-KW"/>
</dbReference>
<dbReference type="GO" id="GO:0039660">
    <property type="term" value="F:structural constituent of virion"/>
    <property type="evidence" value="ECO:0007669"/>
    <property type="project" value="UniProtKB-KW"/>
</dbReference>
<dbReference type="GO" id="GO:0019068">
    <property type="term" value="P:virion assembly"/>
    <property type="evidence" value="ECO:0007669"/>
    <property type="project" value="InterPro"/>
</dbReference>
<dbReference type="Gene3D" id="2.70.20.60">
    <property type="entry name" value="Viral matrix protein, C-terminal domain"/>
    <property type="match status" value="1"/>
</dbReference>
<dbReference type="Gene3D" id="2.70.20.50">
    <property type="entry name" value="Viral matrix protein, N-terminal domain"/>
    <property type="match status" value="1"/>
</dbReference>
<dbReference type="InterPro" id="IPR042539">
    <property type="entry name" value="Matrix_C"/>
</dbReference>
<dbReference type="InterPro" id="IPR042540">
    <property type="entry name" value="Matrix_N"/>
</dbReference>
<dbReference type="InterPro" id="IPR055413">
    <property type="entry name" value="Matrix_Paramyxo_C"/>
</dbReference>
<dbReference type="InterPro" id="IPR000982">
    <property type="entry name" value="Matrix_Paramyxo_N"/>
</dbReference>
<dbReference type="Pfam" id="PF23765">
    <property type="entry name" value="Matrix_Paramyxo_C"/>
    <property type="match status" value="1"/>
</dbReference>
<dbReference type="Pfam" id="PF00661">
    <property type="entry name" value="Matrix_Paramyxo_N"/>
    <property type="match status" value="1"/>
</dbReference>
<sequence length="335" mass="37867">MTEVYDFDRSSWDTKGSLAPILPTTYPDGRLIPQVRVIDPGLGDRKDECFMYIFLLGIIEDNDDLGPPIGRSFGSLPLGVGRTAARPEELLKEATLLDIVVRRTASVKEQLVFYNNTPLHVLTPWRKVLTNGSVFSANQVCNAVNLIPLDTAQRFRVVYMSITRLSDDGCYRIPRGMFDFRCKNALAFNILVTIQVEGDFCSNRGNLSMFKDQQATFMVHIGNFSRKKNQAYSADYCKLKIEKMGLVFALGGIGGTSLHIRCTGKMSKTLNAQLGFKKILCYPLMEINEDLNRMLWRLECKIVRIQAVLQPSVPQEFRIYNDVIISDDQGLFKIL</sequence>
<accession>P35947</accession>
<accession>Q90093</accession>
<reference key="1">
    <citation type="journal article" date="1992" name="J. Gen. Virol.">
        <title>The genes encoding the phospho- and matrix proteins of phocine distemper virus.</title>
        <authorList>
            <person name="Curran M.D."/>
            <person name="Rima B.K."/>
        </authorList>
    </citation>
    <scope>NUCLEOTIDE SEQUENCE</scope>
    <source>
        <strain>Ulster/88</strain>
    </source>
</reference>
<reference key="2">
    <citation type="journal article" date="1992" name="Virus Res.">
        <title>The nucleotide and deduced amino acid sequence of the M gene of phocid distemper virus (PDV). The most conserved protein of morbilliviruses shows a uniquely close relationship between PDV and canine distemper virus.</title>
        <authorList>
            <person name="Sharma B."/>
            <person name="Norrby E."/>
            <person name="Blixenkrone-Moeller M."/>
            <person name="Koevamees J."/>
        </authorList>
    </citation>
    <scope>NUCLEOTIDE SEQUENCE [GENOMIC DNA]</scope>
</reference>